<proteinExistence type="inferred from homology"/>
<comment type="function">
    <text evidence="1">Catalyzes the GTP-dependent ribosomal translocation step during translation elongation. During this step, the ribosome changes from the pre-translocational (PRE) to the post-translocational (POST) state as the newly formed A-site-bound peptidyl-tRNA and P-site-bound deacylated tRNA move to the P and E sites, respectively. Catalyzes the coordinated movement of the two tRNA molecules, the mRNA and conformational changes in the ribosome.</text>
</comment>
<comment type="subcellular location">
    <subcellularLocation>
        <location evidence="1">Cytoplasm</location>
    </subcellularLocation>
</comment>
<comment type="similarity">
    <text evidence="1">Belongs to the TRAFAC class translation factor GTPase superfamily. Classic translation factor GTPase family. EF-G/EF-2 subfamily.</text>
</comment>
<protein>
    <recommendedName>
        <fullName evidence="1">Elongation factor G</fullName>
        <shortName evidence="1">EF-G</shortName>
    </recommendedName>
</protein>
<reference key="1">
    <citation type="journal article" date="2008" name="Environ. Microbiol.">
        <title>The genome of Erwinia tasmaniensis strain Et1/99, a non-pathogenic bacterium in the genus Erwinia.</title>
        <authorList>
            <person name="Kube M."/>
            <person name="Migdoll A.M."/>
            <person name="Mueller I."/>
            <person name="Kuhl H."/>
            <person name="Beck A."/>
            <person name="Reinhardt R."/>
            <person name="Geider K."/>
        </authorList>
    </citation>
    <scope>NUCLEOTIDE SEQUENCE [LARGE SCALE GENOMIC DNA]</scope>
    <source>
        <strain>DSM 17950 / CFBP 7177 / CIP 109463 / NCPPB 4357 / Et1/99</strain>
    </source>
</reference>
<name>EFG_ERWT9</name>
<evidence type="ECO:0000255" key="1">
    <source>
        <dbReference type="HAMAP-Rule" id="MF_00054"/>
    </source>
</evidence>
<organism>
    <name type="scientific">Erwinia tasmaniensis (strain DSM 17950 / CFBP 7177 / CIP 109463 / NCPPB 4357 / Et1/99)</name>
    <dbReference type="NCBI Taxonomy" id="465817"/>
    <lineage>
        <taxon>Bacteria</taxon>
        <taxon>Pseudomonadati</taxon>
        <taxon>Pseudomonadota</taxon>
        <taxon>Gammaproteobacteria</taxon>
        <taxon>Enterobacterales</taxon>
        <taxon>Erwiniaceae</taxon>
        <taxon>Erwinia</taxon>
    </lineage>
</organism>
<sequence>MARTTPITRYRNIGISAHIDAGKTTTTERILFYTGVNHKIGEVHDGAATMDWMAQEQERGITITSAATTAFWSGMAKQFEPHRVNIIDTPGHVDFTIEVERSMRVLDGAVMVYCAVGGVQPQSETVWRQANKYKVPRIAFVNKMDRMGANFLKVVSQIKSRLAANPVPIQLAIGAEEKFTGVVDLVKMKAINWNEADAGVTFEYEEIPADMQELAEEWHQNLVESAAEASEELMEKYLGGEELTEEEIKKALRQRVLNNEVILVTCGSAFKNKGVQAMLDAVIEYLPAPTDVTAINGILDDGKDTPAVRHSDDKEPFAALAFKIATDPFVGNLTFFRVYSGVVNSGDTVMNPVKSQRERLGRIVQMHANKREEIKEVRAGDIAAAIGLKDVTTGDTLCDPSNVIILERMEFPEPVISVAVEPKTKADQEKMGLALGRLAKEDPSFRVWTDEESGQTIIAGMGELHLDILVDRMKREFNVEANVGKPQVAYRETIRETVKDVEGKHAKQSGGRGQFGHVVIDMGPLEAGGPGYEFVNDIVGGSIPKEFIPAVDKGIQEQLKSGPLAGYPVVDIKVRLHYGSYHDVDSSELAFKLAASLAFKSAFGKAKPVLLEPVMKVEVETPEDYMGDVIGDLNRRRGMIEGMEDTSTGKTVRAQVPLSEMFGYATDLRSQTQGRASYSMEFLKYAEAPNNVAQAVIEARGK</sequence>
<accession>B2VK36</accession>
<dbReference type="EMBL" id="CU468135">
    <property type="protein sequence ID" value="CAO98213.1"/>
    <property type="molecule type" value="Genomic_DNA"/>
</dbReference>
<dbReference type="RefSeq" id="WP_012442847.1">
    <property type="nucleotide sequence ID" value="NC_010694.1"/>
</dbReference>
<dbReference type="SMR" id="B2VK36"/>
<dbReference type="STRING" id="465817.ETA_31670"/>
<dbReference type="KEGG" id="eta:ETA_31670"/>
<dbReference type="eggNOG" id="COG0480">
    <property type="taxonomic scope" value="Bacteria"/>
</dbReference>
<dbReference type="HOGENOM" id="CLU_002794_4_1_6"/>
<dbReference type="OrthoDB" id="9804431at2"/>
<dbReference type="Proteomes" id="UP000001726">
    <property type="component" value="Chromosome"/>
</dbReference>
<dbReference type="GO" id="GO:0005737">
    <property type="term" value="C:cytoplasm"/>
    <property type="evidence" value="ECO:0007669"/>
    <property type="project" value="UniProtKB-SubCell"/>
</dbReference>
<dbReference type="GO" id="GO:0005525">
    <property type="term" value="F:GTP binding"/>
    <property type="evidence" value="ECO:0007669"/>
    <property type="project" value="UniProtKB-UniRule"/>
</dbReference>
<dbReference type="GO" id="GO:0003924">
    <property type="term" value="F:GTPase activity"/>
    <property type="evidence" value="ECO:0007669"/>
    <property type="project" value="InterPro"/>
</dbReference>
<dbReference type="GO" id="GO:0097216">
    <property type="term" value="F:guanosine tetraphosphate binding"/>
    <property type="evidence" value="ECO:0007669"/>
    <property type="project" value="UniProtKB-ARBA"/>
</dbReference>
<dbReference type="GO" id="GO:0003746">
    <property type="term" value="F:translation elongation factor activity"/>
    <property type="evidence" value="ECO:0007669"/>
    <property type="project" value="UniProtKB-UniRule"/>
</dbReference>
<dbReference type="GO" id="GO:0032790">
    <property type="term" value="P:ribosome disassembly"/>
    <property type="evidence" value="ECO:0007669"/>
    <property type="project" value="TreeGrafter"/>
</dbReference>
<dbReference type="CDD" id="cd01886">
    <property type="entry name" value="EF-G"/>
    <property type="match status" value="1"/>
</dbReference>
<dbReference type="CDD" id="cd16262">
    <property type="entry name" value="EFG_III"/>
    <property type="match status" value="1"/>
</dbReference>
<dbReference type="CDD" id="cd01434">
    <property type="entry name" value="EFG_mtEFG1_IV"/>
    <property type="match status" value="1"/>
</dbReference>
<dbReference type="CDD" id="cd03713">
    <property type="entry name" value="EFG_mtEFG_C"/>
    <property type="match status" value="1"/>
</dbReference>
<dbReference type="CDD" id="cd04088">
    <property type="entry name" value="EFG_mtEFG_II"/>
    <property type="match status" value="1"/>
</dbReference>
<dbReference type="FunFam" id="2.40.30.10:FF:000006">
    <property type="entry name" value="Elongation factor G"/>
    <property type="match status" value="1"/>
</dbReference>
<dbReference type="FunFam" id="3.30.230.10:FF:000003">
    <property type="entry name" value="Elongation factor G"/>
    <property type="match status" value="1"/>
</dbReference>
<dbReference type="FunFam" id="3.30.70.240:FF:000001">
    <property type="entry name" value="Elongation factor G"/>
    <property type="match status" value="1"/>
</dbReference>
<dbReference type="FunFam" id="3.30.70.870:FF:000001">
    <property type="entry name" value="Elongation factor G"/>
    <property type="match status" value="1"/>
</dbReference>
<dbReference type="FunFam" id="3.40.50.300:FF:000029">
    <property type="entry name" value="Elongation factor G"/>
    <property type="match status" value="1"/>
</dbReference>
<dbReference type="Gene3D" id="3.30.230.10">
    <property type="match status" value="1"/>
</dbReference>
<dbReference type="Gene3D" id="3.30.70.240">
    <property type="match status" value="1"/>
</dbReference>
<dbReference type="Gene3D" id="3.30.70.870">
    <property type="entry name" value="Elongation Factor G (Translational Gtpase), domain 3"/>
    <property type="match status" value="1"/>
</dbReference>
<dbReference type="Gene3D" id="3.40.50.300">
    <property type="entry name" value="P-loop containing nucleotide triphosphate hydrolases"/>
    <property type="match status" value="1"/>
</dbReference>
<dbReference type="Gene3D" id="2.40.30.10">
    <property type="entry name" value="Translation factors"/>
    <property type="match status" value="1"/>
</dbReference>
<dbReference type="HAMAP" id="MF_00054_B">
    <property type="entry name" value="EF_G_EF_2_B"/>
    <property type="match status" value="1"/>
</dbReference>
<dbReference type="InterPro" id="IPR041095">
    <property type="entry name" value="EFG_II"/>
</dbReference>
<dbReference type="InterPro" id="IPR009022">
    <property type="entry name" value="EFG_III"/>
</dbReference>
<dbReference type="InterPro" id="IPR035647">
    <property type="entry name" value="EFG_III/V"/>
</dbReference>
<dbReference type="InterPro" id="IPR047872">
    <property type="entry name" value="EFG_IV"/>
</dbReference>
<dbReference type="InterPro" id="IPR035649">
    <property type="entry name" value="EFG_V"/>
</dbReference>
<dbReference type="InterPro" id="IPR000640">
    <property type="entry name" value="EFG_V-like"/>
</dbReference>
<dbReference type="InterPro" id="IPR004161">
    <property type="entry name" value="EFTu-like_2"/>
</dbReference>
<dbReference type="InterPro" id="IPR031157">
    <property type="entry name" value="G_TR_CS"/>
</dbReference>
<dbReference type="InterPro" id="IPR027417">
    <property type="entry name" value="P-loop_NTPase"/>
</dbReference>
<dbReference type="InterPro" id="IPR020568">
    <property type="entry name" value="Ribosomal_Su5_D2-typ_SF"/>
</dbReference>
<dbReference type="InterPro" id="IPR014721">
    <property type="entry name" value="Ribsml_uS5_D2-typ_fold_subgr"/>
</dbReference>
<dbReference type="InterPro" id="IPR005225">
    <property type="entry name" value="Small_GTP-bd"/>
</dbReference>
<dbReference type="InterPro" id="IPR000795">
    <property type="entry name" value="T_Tr_GTP-bd_dom"/>
</dbReference>
<dbReference type="InterPro" id="IPR009000">
    <property type="entry name" value="Transl_B-barrel_sf"/>
</dbReference>
<dbReference type="InterPro" id="IPR004540">
    <property type="entry name" value="Transl_elong_EFG/EF2"/>
</dbReference>
<dbReference type="InterPro" id="IPR005517">
    <property type="entry name" value="Transl_elong_EFG/EF2_IV"/>
</dbReference>
<dbReference type="NCBIfam" id="TIGR00484">
    <property type="entry name" value="EF-G"/>
    <property type="match status" value="1"/>
</dbReference>
<dbReference type="NCBIfam" id="NF009381">
    <property type="entry name" value="PRK12740.1-5"/>
    <property type="match status" value="1"/>
</dbReference>
<dbReference type="NCBIfam" id="TIGR00231">
    <property type="entry name" value="small_GTP"/>
    <property type="match status" value="1"/>
</dbReference>
<dbReference type="PANTHER" id="PTHR43261:SF1">
    <property type="entry name" value="RIBOSOME-RELEASING FACTOR 2, MITOCHONDRIAL"/>
    <property type="match status" value="1"/>
</dbReference>
<dbReference type="PANTHER" id="PTHR43261">
    <property type="entry name" value="TRANSLATION ELONGATION FACTOR G-RELATED"/>
    <property type="match status" value="1"/>
</dbReference>
<dbReference type="Pfam" id="PF00679">
    <property type="entry name" value="EFG_C"/>
    <property type="match status" value="1"/>
</dbReference>
<dbReference type="Pfam" id="PF14492">
    <property type="entry name" value="EFG_III"/>
    <property type="match status" value="1"/>
</dbReference>
<dbReference type="Pfam" id="PF03764">
    <property type="entry name" value="EFG_IV"/>
    <property type="match status" value="1"/>
</dbReference>
<dbReference type="Pfam" id="PF00009">
    <property type="entry name" value="GTP_EFTU"/>
    <property type="match status" value="1"/>
</dbReference>
<dbReference type="Pfam" id="PF03144">
    <property type="entry name" value="GTP_EFTU_D2"/>
    <property type="match status" value="1"/>
</dbReference>
<dbReference type="PRINTS" id="PR00315">
    <property type="entry name" value="ELONGATNFCT"/>
</dbReference>
<dbReference type="SMART" id="SM00838">
    <property type="entry name" value="EFG_C"/>
    <property type="match status" value="1"/>
</dbReference>
<dbReference type="SMART" id="SM00889">
    <property type="entry name" value="EFG_IV"/>
    <property type="match status" value="1"/>
</dbReference>
<dbReference type="SUPFAM" id="SSF54980">
    <property type="entry name" value="EF-G C-terminal domain-like"/>
    <property type="match status" value="2"/>
</dbReference>
<dbReference type="SUPFAM" id="SSF52540">
    <property type="entry name" value="P-loop containing nucleoside triphosphate hydrolases"/>
    <property type="match status" value="1"/>
</dbReference>
<dbReference type="SUPFAM" id="SSF54211">
    <property type="entry name" value="Ribosomal protein S5 domain 2-like"/>
    <property type="match status" value="1"/>
</dbReference>
<dbReference type="SUPFAM" id="SSF50447">
    <property type="entry name" value="Translation proteins"/>
    <property type="match status" value="1"/>
</dbReference>
<dbReference type="PROSITE" id="PS00301">
    <property type="entry name" value="G_TR_1"/>
    <property type="match status" value="1"/>
</dbReference>
<dbReference type="PROSITE" id="PS51722">
    <property type="entry name" value="G_TR_2"/>
    <property type="match status" value="1"/>
</dbReference>
<feature type="chain" id="PRO_1000091710" description="Elongation factor G">
    <location>
        <begin position="1"/>
        <end position="702"/>
    </location>
</feature>
<feature type="domain" description="tr-type G">
    <location>
        <begin position="8"/>
        <end position="290"/>
    </location>
</feature>
<feature type="binding site" evidence="1">
    <location>
        <begin position="17"/>
        <end position="24"/>
    </location>
    <ligand>
        <name>GTP</name>
        <dbReference type="ChEBI" id="CHEBI:37565"/>
    </ligand>
</feature>
<feature type="binding site" evidence="1">
    <location>
        <begin position="88"/>
        <end position="92"/>
    </location>
    <ligand>
        <name>GTP</name>
        <dbReference type="ChEBI" id="CHEBI:37565"/>
    </ligand>
</feature>
<feature type="binding site" evidence="1">
    <location>
        <begin position="142"/>
        <end position="145"/>
    </location>
    <ligand>
        <name>GTP</name>
        <dbReference type="ChEBI" id="CHEBI:37565"/>
    </ligand>
</feature>
<gene>
    <name evidence="1" type="primary">fusA</name>
    <name type="ordered locus">ETA_31670</name>
</gene>
<keyword id="KW-0963">Cytoplasm</keyword>
<keyword id="KW-0251">Elongation factor</keyword>
<keyword id="KW-0342">GTP-binding</keyword>
<keyword id="KW-0547">Nucleotide-binding</keyword>
<keyword id="KW-0648">Protein biosynthesis</keyword>
<keyword id="KW-1185">Reference proteome</keyword>